<reference key="1">
    <citation type="submission" date="2006-10" db="EMBL/GenBank/DDBJ databases">
        <authorList>
            <person name="Fleischmann R.D."/>
            <person name="Dodson R.J."/>
            <person name="Haft D.H."/>
            <person name="Merkel J.S."/>
            <person name="Nelson W.C."/>
            <person name="Fraser C.M."/>
        </authorList>
    </citation>
    <scope>NUCLEOTIDE SEQUENCE [LARGE SCALE GENOMIC DNA]</scope>
    <source>
        <strain>ATCC 700084 / mc(2)155</strain>
    </source>
</reference>
<reference key="2">
    <citation type="journal article" date="2007" name="Genome Biol.">
        <title>Interrupted coding sequences in Mycobacterium smegmatis: authentic mutations or sequencing errors?</title>
        <authorList>
            <person name="Deshayes C."/>
            <person name="Perrodou E."/>
            <person name="Gallien S."/>
            <person name="Euphrasie D."/>
            <person name="Schaeffer C."/>
            <person name="Van-Dorsselaer A."/>
            <person name="Poch O."/>
            <person name="Lecompte O."/>
            <person name="Reyrat J.-M."/>
        </authorList>
    </citation>
    <scope>NUCLEOTIDE SEQUENCE [LARGE SCALE GENOMIC DNA]</scope>
    <source>
        <strain>ATCC 700084 / mc(2)155</strain>
    </source>
</reference>
<reference key="3">
    <citation type="journal article" date="2009" name="Genome Res.">
        <title>Ortho-proteogenomics: multiple proteomes investigation through orthology and a new MS-based protocol.</title>
        <authorList>
            <person name="Gallien S."/>
            <person name="Perrodou E."/>
            <person name="Carapito C."/>
            <person name="Deshayes C."/>
            <person name="Reyrat J.-M."/>
            <person name="Van Dorsselaer A."/>
            <person name="Poch O."/>
            <person name="Schaeffer C."/>
            <person name="Lecompte O."/>
        </authorList>
    </citation>
    <scope>NUCLEOTIDE SEQUENCE [LARGE SCALE GENOMIC DNA]</scope>
    <source>
        <strain>ATCC 700084 / mc(2)155</strain>
    </source>
</reference>
<reference key="4">
    <citation type="submission" date="2001-08" db="EMBL/GenBank/DDBJ databases">
        <authorList>
            <person name="Derbyshire K.M."/>
            <person name="Parsons L.M."/>
            <person name="DeVost J."/>
        </authorList>
    </citation>
    <scope>NUCLEOTIDE SEQUENCE [GENOMIC DNA] OF 1-280</scope>
</reference>
<protein>
    <recommendedName>
        <fullName evidence="2">Haloalkane dehalogenase</fullName>
        <ecNumber evidence="2">3.8.1.5</ecNumber>
    </recommendedName>
</protein>
<comment type="function">
    <text evidence="2">Catalyzes hydrolytic cleavage of carbon-halogen bonds in halogenated aliphatic compounds, leading to the formation of the corresponding primary alcohols, halide ions and protons.</text>
</comment>
<comment type="catalytic activity">
    <reaction evidence="2">
        <text>1-haloalkane + H2O = a halide anion + a primary alcohol + H(+)</text>
        <dbReference type="Rhea" id="RHEA:19081"/>
        <dbReference type="ChEBI" id="CHEBI:15377"/>
        <dbReference type="ChEBI" id="CHEBI:15378"/>
        <dbReference type="ChEBI" id="CHEBI:15734"/>
        <dbReference type="ChEBI" id="CHEBI:16042"/>
        <dbReference type="ChEBI" id="CHEBI:18060"/>
        <dbReference type="EC" id="3.8.1.5"/>
    </reaction>
</comment>
<comment type="subunit">
    <text evidence="2">Monomer.</text>
</comment>
<comment type="similarity">
    <text evidence="2">Belongs to the haloalkane dehalogenase family. Type 2 subfamily.</text>
</comment>
<accession>Q938B4</accession>
<accession>A0R7A4</accession>
<accession>I7GBR8</accession>
<organism>
    <name type="scientific">Mycolicibacterium smegmatis (strain ATCC 700084 / mc(2)155)</name>
    <name type="common">Mycobacterium smegmatis</name>
    <dbReference type="NCBI Taxonomy" id="246196"/>
    <lineage>
        <taxon>Bacteria</taxon>
        <taxon>Bacillati</taxon>
        <taxon>Actinomycetota</taxon>
        <taxon>Actinomycetes</taxon>
        <taxon>Mycobacteriales</taxon>
        <taxon>Mycobacteriaceae</taxon>
        <taxon>Mycolicibacterium</taxon>
    </lineage>
</organism>
<evidence type="ECO:0000255" key="1"/>
<evidence type="ECO:0000255" key="2">
    <source>
        <dbReference type="HAMAP-Rule" id="MF_01231"/>
    </source>
</evidence>
<gene>
    <name evidence="2" type="primary">dhaA</name>
    <name type="ordered locus">MSMEG_6837</name>
    <name type="ordered locus">MSMEI_6656</name>
</gene>
<dbReference type="EC" id="3.8.1.5" evidence="2"/>
<dbReference type="EMBL" id="CP000480">
    <property type="protein sequence ID" value="ABK74278.1"/>
    <property type="molecule type" value="Genomic_DNA"/>
</dbReference>
<dbReference type="EMBL" id="AY054120">
    <property type="protein sequence ID" value="AAL17946.1"/>
    <property type="molecule type" value="Genomic_DNA"/>
</dbReference>
<dbReference type="EMBL" id="CP001663">
    <property type="protein sequence ID" value="AFP43082.1"/>
    <property type="molecule type" value="Genomic_DNA"/>
</dbReference>
<dbReference type="RefSeq" id="WP_011731575.1">
    <property type="nucleotide sequence ID" value="NZ_SIJM01000001.1"/>
</dbReference>
<dbReference type="RefSeq" id="YP_891042.1">
    <property type="nucleotide sequence ID" value="NC_008596.1"/>
</dbReference>
<dbReference type="SMR" id="Q938B4"/>
<dbReference type="STRING" id="246196.MSMEG_6837"/>
<dbReference type="ESTHER" id="mycsm-Q938B4">
    <property type="family name" value="Haloalkane_dehalogenase-HLD2"/>
</dbReference>
<dbReference type="PaxDb" id="246196-MSMEI_6656"/>
<dbReference type="KEGG" id="msb:LJ00_33790"/>
<dbReference type="KEGG" id="msg:MSMEI_6656"/>
<dbReference type="KEGG" id="msm:MSMEG_6837"/>
<dbReference type="PATRIC" id="fig|246196.19.peg.6660"/>
<dbReference type="eggNOG" id="COG0596">
    <property type="taxonomic scope" value="Bacteria"/>
</dbReference>
<dbReference type="OrthoDB" id="812569at2"/>
<dbReference type="Proteomes" id="UP000000757">
    <property type="component" value="Chromosome"/>
</dbReference>
<dbReference type="Proteomes" id="UP000006158">
    <property type="component" value="Chromosome"/>
</dbReference>
<dbReference type="GO" id="GO:0016020">
    <property type="term" value="C:membrane"/>
    <property type="evidence" value="ECO:0007669"/>
    <property type="project" value="TreeGrafter"/>
</dbReference>
<dbReference type="GO" id="GO:0018786">
    <property type="term" value="F:haloalkane dehalogenase activity"/>
    <property type="evidence" value="ECO:0007669"/>
    <property type="project" value="UniProtKB-UniRule"/>
</dbReference>
<dbReference type="Gene3D" id="3.40.50.1820">
    <property type="entry name" value="alpha/beta hydrolase"/>
    <property type="match status" value="1"/>
</dbReference>
<dbReference type="HAMAP" id="MF_01231">
    <property type="entry name" value="Haloalk_dehal_type2"/>
    <property type="match status" value="1"/>
</dbReference>
<dbReference type="InterPro" id="IPR000073">
    <property type="entry name" value="AB_hydrolase_1"/>
</dbReference>
<dbReference type="InterPro" id="IPR029058">
    <property type="entry name" value="AB_hydrolase_fold"/>
</dbReference>
<dbReference type="InterPro" id="IPR050266">
    <property type="entry name" value="AB_hydrolase_sf"/>
</dbReference>
<dbReference type="InterPro" id="IPR023594">
    <property type="entry name" value="Haloalkane_dehalogenase_2"/>
</dbReference>
<dbReference type="NCBIfam" id="NF002938">
    <property type="entry name" value="PRK03592.1"/>
    <property type="match status" value="1"/>
</dbReference>
<dbReference type="PANTHER" id="PTHR43798:SF24">
    <property type="entry name" value="CIS-3-ALKYL-4-ALKYLOXETAN-2-ONE DECARBOXYLASE"/>
    <property type="match status" value="1"/>
</dbReference>
<dbReference type="PANTHER" id="PTHR43798">
    <property type="entry name" value="MONOACYLGLYCEROL LIPASE"/>
    <property type="match status" value="1"/>
</dbReference>
<dbReference type="Pfam" id="PF00561">
    <property type="entry name" value="Abhydrolase_1"/>
    <property type="match status" value="1"/>
</dbReference>
<dbReference type="SUPFAM" id="SSF53474">
    <property type="entry name" value="alpha/beta-Hydrolases"/>
    <property type="match status" value="1"/>
</dbReference>
<keyword id="KW-0378">Hydrolase</keyword>
<keyword id="KW-1185">Reference proteome</keyword>
<feature type="chain" id="PRO_0000216782" description="Haloalkane dehalogenase">
    <location>
        <begin position="1"/>
        <end position="311"/>
    </location>
</feature>
<feature type="domain" description="AB hydrolase-1" evidence="1">
    <location>
        <begin position="30"/>
        <end position="148"/>
    </location>
</feature>
<feature type="active site" description="Nucleophile" evidence="2">
    <location>
        <position position="107"/>
    </location>
</feature>
<feature type="active site" description="Proton donor" evidence="2">
    <location>
        <position position="131"/>
    </location>
</feature>
<feature type="active site" description="Proton acceptor" evidence="2">
    <location>
        <position position="272"/>
    </location>
</feature>
<name>DHAA_MYCS2</name>
<sequence length="311" mass="34979">MPGSEPYGRLQYREINGKRMAYIDEARGDAIVFQHGNPSSSYLWRNVLPHTEGLGRLVACDLIGMGASDKLDGSGPDSYHYHENRDYLFALWDALDLGDRVTLVLHDWGGALGFDWANRHRDRVAGIVHMETVSVPMEWDDFPDEVAQMFRGLRSPQGEEMVLENNAFIEGVLPSIVMRTLSEEEMIHYRRPFLNAGEDRRPTLSWPRDVPLAGEPAEVVAVIEDFGEWLATSDIPKLFIRADPGVIQGKQRILDIVRSWPNQTEITVPGTHFLQEDSADQIGEAIASFVREIRAGDNLHREAAPEMNSAS</sequence>
<proteinExistence type="inferred from homology"/>